<accession>A6VJ31</accession>
<name>ENO_METM7</name>
<proteinExistence type="inferred from homology"/>
<reference key="1">
    <citation type="submission" date="2007-06" db="EMBL/GenBank/DDBJ databases">
        <title>Complete sequence of Methanococcus maripaludis C7.</title>
        <authorList>
            <consortium name="US DOE Joint Genome Institute"/>
            <person name="Copeland A."/>
            <person name="Lucas S."/>
            <person name="Lapidus A."/>
            <person name="Barry K."/>
            <person name="Glavina del Rio T."/>
            <person name="Dalin E."/>
            <person name="Tice H."/>
            <person name="Pitluck S."/>
            <person name="Clum A."/>
            <person name="Schmutz J."/>
            <person name="Larimer F."/>
            <person name="Land M."/>
            <person name="Hauser L."/>
            <person name="Kyrpides N."/>
            <person name="Anderson I."/>
            <person name="Sieprawska-Lupa M."/>
            <person name="Whitman W.B."/>
            <person name="Richardson P."/>
        </authorList>
    </citation>
    <scope>NUCLEOTIDE SEQUENCE [LARGE SCALE GENOMIC DNA]</scope>
    <source>
        <strain>C7 / ATCC BAA-1331</strain>
    </source>
</reference>
<keyword id="KW-0963">Cytoplasm</keyword>
<keyword id="KW-0324">Glycolysis</keyword>
<keyword id="KW-0456">Lyase</keyword>
<keyword id="KW-0460">Magnesium</keyword>
<keyword id="KW-0479">Metal-binding</keyword>
<keyword id="KW-0964">Secreted</keyword>
<feature type="chain" id="PRO_0000337624" description="Enolase">
    <location>
        <begin position="1"/>
        <end position="426"/>
    </location>
</feature>
<feature type="active site" description="Proton donor" evidence="1">
    <location>
        <position position="209"/>
    </location>
</feature>
<feature type="active site" description="Proton acceptor" evidence="1">
    <location>
        <position position="338"/>
    </location>
</feature>
<feature type="binding site" evidence="1">
    <location>
        <position position="165"/>
    </location>
    <ligand>
        <name>(2R)-2-phosphoglycerate</name>
        <dbReference type="ChEBI" id="CHEBI:58289"/>
    </ligand>
</feature>
<feature type="binding site" evidence="1">
    <location>
        <position position="244"/>
    </location>
    <ligand>
        <name>Mg(2+)</name>
        <dbReference type="ChEBI" id="CHEBI:18420"/>
    </ligand>
</feature>
<feature type="binding site" evidence="1">
    <location>
        <position position="287"/>
    </location>
    <ligand>
        <name>Mg(2+)</name>
        <dbReference type="ChEBI" id="CHEBI:18420"/>
    </ligand>
</feature>
<feature type="binding site" evidence="1">
    <location>
        <position position="313"/>
    </location>
    <ligand>
        <name>Mg(2+)</name>
        <dbReference type="ChEBI" id="CHEBI:18420"/>
    </ligand>
</feature>
<feature type="binding site" evidence="1">
    <location>
        <position position="338"/>
    </location>
    <ligand>
        <name>(2R)-2-phosphoglycerate</name>
        <dbReference type="ChEBI" id="CHEBI:58289"/>
    </ligand>
</feature>
<feature type="binding site" evidence="1">
    <location>
        <position position="367"/>
    </location>
    <ligand>
        <name>(2R)-2-phosphoglycerate</name>
        <dbReference type="ChEBI" id="CHEBI:58289"/>
    </ligand>
</feature>
<feature type="binding site" evidence="1">
    <location>
        <position position="368"/>
    </location>
    <ligand>
        <name>(2R)-2-phosphoglycerate</name>
        <dbReference type="ChEBI" id="CHEBI:58289"/>
    </ligand>
</feature>
<feature type="binding site" evidence="1">
    <location>
        <position position="389"/>
    </location>
    <ligand>
        <name>(2R)-2-phosphoglycerate</name>
        <dbReference type="ChEBI" id="CHEBI:58289"/>
    </ligand>
</feature>
<gene>
    <name evidence="1" type="primary">eno</name>
    <name type="ordered locus">MmarC7_1394</name>
</gene>
<comment type="function">
    <text evidence="1">Catalyzes the reversible conversion of 2-phosphoglycerate (2-PG) into phosphoenolpyruvate (PEP). It is essential for the degradation of carbohydrates via glycolysis.</text>
</comment>
<comment type="catalytic activity">
    <reaction evidence="1">
        <text>(2R)-2-phosphoglycerate = phosphoenolpyruvate + H2O</text>
        <dbReference type="Rhea" id="RHEA:10164"/>
        <dbReference type="ChEBI" id="CHEBI:15377"/>
        <dbReference type="ChEBI" id="CHEBI:58289"/>
        <dbReference type="ChEBI" id="CHEBI:58702"/>
        <dbReference type="EC" id="4.2.1.11"/>
    </reaction>
</comment>
<comment type="cofactor">
    <cofactor evidence="1">
        <name>Mg(2+)</name>
        <dbReference type="ChEBI" id="CHEBI:18420"/>
    </cofactor>
    <text evidence="1">Binds a second Mg(2+) ion via substrate during catalysis.</text>
</comment>
<comment type="pathway">
    <text evidence="1">Carbohydrate degradation; glycolysis; pyruvate from D-glyceraldehyde 3-phosphate: step 4/5.</text>
</comment>
<comment type="subcellular location">
    <subcellularLocation>
        <location evidence="1">Cytoplasm</location>
    </subcellularLocation>
    <subcellularLocation>
        <location evidence="1">Secreted</location>
    </subcellularLocation>
    <subcellularLocation>
        <location evidence="1">Cell surface</location>
    </subcellularLocation>
    <text evidence="1">Fractions of enolase are present in both the cytoplasm and on the cell surface.</text>
</comment>
<comment type="similarity">
    <text evidence="1">Belongs to the enolase family.</text>
</comment>
<comment type="sequence caution" evidence="2">
    <conflict type="erroneous initiation">
        <sequence resource="EMBL-CDS" id="ABR66457"/>
    </conflict>
    <text>Extended N-terminus.</text>
</comment>
<sequence>MDDSFDIYEIKARQVLDSRGNPTVEAEVLTAGGGYGHTIVPSGASTGTFEAVELRDATEKYGGKSVLNAVSNVNDIIAQELIGEDARNQRLIDQIMLNLDGTENKGNLGANAILAVSLAVAKAAADTASLPLYKYIGGCNAYVMPAPMMNVLNGGQHAGNALDFQEFMIMPVGADSFAEAVRMCAETYQSLKKVVAEKYGKDAVNIGDEGGFAPPVKTIDEALALLLEGVKRAGYEDEIVFTLDSAASEFYDEKSGSYIVAGEKVSTDKLIDIYKEMVAQYPIVSIEDPLFEEDFEGFKIATQELKGIQIVGDDLFVTNTKRLKKGIEMGAANSLLLKVNQIGTLSESIDAANMAFRNGYSLVVSHRSGESEDSTIADLAVALNAGQIKTGAPARGERTAKYNQLIRIEEELQISKYAGKDFKVPF</sequence>
<dbReference type="EC" id="4.2.1.11" evidence="1"/>
<dbReference type="EMBL" id="CP000745">
    <property type="protein sequence ID" value="ABR66457.1"/>
    <property type="status" value="ALT_INIT"/>
    <property type="molecule type" value="Genomic_DNA"/>
</dbReference>
<dbReference type="SMR" id="A6VJ31"/>
<dbReference type="STRING" id="426368.MmarC7_1394"/>
<dbReference type="KEGG" id="mmz:MmarC7_1394"/>
<dbReference type="eggNOG" id="arCOG01169">
    <property type="taxonomic scope" value="Archaea"/>
</dbReference>
<dbReference type="HOGENOM" id="CLU_031223_2_1_2"/>
<dbReference type="UniPathway" id="UPA00109">
    <property type="reaction ID" value="UER00187"/>
</dbReference>
<dbReference type="GO" id="GO:0009986">
    <property type="term" value="C:cell surface"/>
    <property type="evidence" value="ECO:0007669"/>
    <property type="project" value="UniProtKB-SubCell"/>
</dbReference>
<dbReference type="GO" id="GO:0005576">
    <property type="term" value="C:extracellular region"/>
    <property type="evidence" value="ECO:0007669"/>
    <property type="project" value="UniProtKB-SubCell"/>
</dbReference>
<dbReference type="GO" id="GO:0000015">
    <property type="term" value="C:phosphopyruvate hydratase complex"/>
    <property type="evidence" value="ECO:0007669"/>
    <property type="project" value="InterPro"/>
</dbReference>
<dbReference type="GO" id="GO:0000287">
    <property type="term" value="F:magnesium ion binding"/>
    <property type="evidence" value="ECO:0007669"/>
    <property type="project" value="UniProtKB-UniRule"/>
</dbReference>
<dbReference type="GO" id="GO:0004634">
    <property type="term" value="F:phosphopyruvate hydratase activity"/>
    <property type="evidence" value="ECO:0007669"/>
    <property type="project" value="UniProtKB-UniRule"/>
</dbReference>
<dbReference type="GO" id="GO:0006096">
    <property type="term" value="P:glycolytic process"/>
    <property type="evidence" value="ECO:0007669"/>
    <property type="project" value="UniProtKB-UniRule"/>
</dbReference>
<dbReference type="CDD" id="cd03313">
    <property type="entry name" value="enolase"/>
    <property type="match status" value="1"/>
</dbReference>
<dbReference type="FunFam" id="3.30.390.10:FF:000001">
    <property type="entry name" value="Enolase"/>
    <property type="match status" value="1"/>
</dbReference>
<dbReference type="Gene3D" id="3.20.20.120">
    <property type="entry name" value="Enolase-like C-terminal domain"/>
    <property type="match status" value="1"/>
</dbReference>
<dbReference type="Gene3D" id="3.30.390.10">
    <property type="entry name" value="Enolase-like, N-terminal domain"/>
    <property type="match status" value="1"/>
</dbReference>
<dbReference type="HAMAP" id="MF_00318">
    <property type="entry name" value="Enolase"/>
    <property type="match status" value="1"/>
</dbReference>
<dbReference type="InterPro" id="IPR000941">
    <property type="entry name" value="Enolase"/>
</dbReference>
<dbReference type="InterPro" id="IPR036849">
    <property type="entry name" value="Enolase-like_C_sf"/>
</dbReference>
<dbReference type="InterPro" id="IPR029017">
    <property type="entry name" value="Enolase-like_N"/>
</dbReference>
<dbReference type="InterPro" id="IPR020810">
    <property type="entry name" value="Enolase_C"/>
</dbReference>
<dbReference type="InterPro" id="IPR020809">
    <property type="entry name" value="Enolase_CS"/>
</dbReference>
<dbReference type="InterPro" id="IPR020811">
    <property type="entry name" value="Enolase_N"/>
</dbReference>
<dbReference type="NCBIfam" id="TIGR01060">
    <property type="entry name" value="eno"/>
    <property type="match status" value="1"/>
</dbReference>
<dbReference type="PANTHER" id="PTHR11902">
    <property type="entry name" value="ENOLASE"/>
    <property type="match status" value="1"/>
</dbReference>
<dbReference type="PANTHER" id="PTHR11902:SF1">
    <property type="entry name" value="ENOLASE"/>
    <property type="match status" value="1"/>
</dbReference>
<dbReference type="Pfam" id="PF00113">
    <property type="entry name" value="Enolase_C"/>
    <property type="match status" value="1"/>
</dbReference>
<dbReference type="Pfam" id="PF03952">
    <property type="entry name" value="Enolase_N"/>
    <property type="match status" value="1"/>
</dbReference>
<dbReference type="PIRSF" id="PIRSF001400">
    <property type="entry name" value="Enolase"/>
    <property type="match status" value="1"/>
</dbReference>
<dbReference type="PRINTS" id="PR00148">
    <property type="entry name" value="ENOLASE"/>
</dbReference>
<dbReference type="SFLD" id="SFLDF00002">
    <property type="entry name" value="enolase"/>
    <property type="match status" value="1"/>
</dbReference>
<dbReference type="SFLD" id="SFLDG00178">
    <property type="entry name" value="enolase"/>
    <property type="match status" value="1"/>
</dbReference>
<dbReference type="SMART" id="SM01192">
    <property type="entry name" value="Enolase_C"/>
    <property type="match status" value="1"/>
</dbReference>
<dbReference type="SMART" id="SM01193">
    <property type="entry name" value="Enolase_N"/>
    <property type="match status" value="1"/>
</dbReference>
<dbReference type="SUPFAM" id="SSF51604">
    <property type="entry name" value="Enolase C-terminal domain-like"/>
    <property type="match status" value="1"/>
</dbReference>
<dbReference type="SUPFAM" id="SSF54826">
    <property type="entry name" value="Enolase N-terminal domain-like"/>
    <property type="match status" value="1"/>
</dbReference>
<dbReference type="PROSITE" id="PS00164">
    <property type="entry name" value="ENOLASE"/>
    <property type="match status" value="1"/>
</dbReference>
<protein>
    <recommendedName>
        <fullName evidence="1">Enolase</fullName>
        <ecNumber evidence="1">4.2.1.11</ecNumber>
    </recommendedName>
    <alternativeName>
        <fullName evidence="1">2-phospho-D-glycerate hydro-lyase</fullName>
    </alternativeName>
    <alternativeName>
        <fullName evidence="1">2-phosphoglycerate dehydratase</fullName>
    </alternativeName>
</protein>
<organism>
    <name type="scientific">Methanococcus maripaludis (strain C7 / ATCC BAA-1331)</name>
    <dbReference type="NCBI Taxonomy" id="426368"/>
    <lineage>
        <taxon>Archaea</taxon>
        <taxon>Methanobacteriati</taxon>
        <taxon>Methanobacteriota</taxon>
        <taxon>Methanomada group</taxon>
        <taxon>Methanococci</taxon>
        <taxon>Methanococcales</taxon>
        <taxon>Methanococcaceae</taxon>
        <taxon>Methanococcus</taxon>
    </lineage>
</organism>
<evidence type="ECO:0000255" key="1">
    <source>
        <dbReference type="HAMAP-Rule" id="MF_00318"/>
    </source>
</evidence>
<evidence type="ECO:0000305" key="2"/>